<sequence>MKSIVFVALFGLALLAVVCSASEDAHKELLKEVVRAMVVDKTDAVQAEERKCRWYLGGCSQDGDCCKHLQCHSNYEWCVWDGTFSK</sequence>
<organism>
    <name type="scientific">Cyriopagopus hainanus</name>
    <name type="common">Chinese bird spider</name>
    <name type="synonym">Haplopelma hainanum</name>
    <dbReference type="NCBI Taxonomy" id="209901"/>
    <lineage>
        <taxon>Eukaryota</taxon>
        <taxon>Metazoa</taxon>
        <taxon>Ecdysozoa</taxon>
        <taxon>Arthropoda</taxon>
        <taxon>Chelicerata</taxon>
        <taxon>Arachnida</taxon>
        <taxon>Araneae</taxon>
        <taxon>Mygalomorphae</taxon>
        <taxon>Theraphosidae</taxon>
        <taxon>Haplopelma</taxon>
    </lineage>
</organism>
<proteinExistence type="evidence at transcript level"/>
<protein>
    <recommendedName>
        <fullName>Omega-theraphotoxin-Hhn1b</fullName>
        <shortName>Omega-TRTX-Hhn1b</shortName>
    </recommendedName>
    <alternativeName>
        <fullName>Hainantoxin-IX-3</fullName>
        <shortName>HNTX-IX-3</shortName>
    </alternativeName>
</protein>
<keyword id="KW-1015">Disulfide bond</keyword>
<keyword id="KW-0872">Ion channel impairing toxin</keyword>
<keyword id="KW-0960">Knottin</keyword>
<keyword id="KW-0964">Secreted</keyword>
<keyword id="KW-0732">Signal</keyword>
<keyword id="KW-0800">Toxin</keyword>
<feature type="signal peptide" evidence="2">
    <location>
        <begin position="1"/>
        <end position="21"/>
    </location>
</feature>
<feature type="propeptide" id="PRO_0000400663" evidence="1">
    <location>
        <begin position="22"/>
        <end position="50"/>
    </location>
</feature>
<feature type="peptide" id="PRO_0000400664" description="Omega-theraphotoxin-Hhn1b">
    <location>
        <begin position="51"/>
        <end position="86"/>
    </location>
</feature>
<feature type="disulfide bond" evidence="1">
    <location>
        <begin position="52"/>
        <end position="66"/>
    </location>
</feature>
<feature type="disulfide bond" evidence="1">
    <location>
        <begin position="59"/>
        <end position="71"/>
    </location>
</feature>
<feature type="disulfide bond" evidence="1">
    <location>
        <begin position="65"/>
        <end position="78"/>
    </location>
</feature>
<name>H9C01_CYRHA</name>
<dbReference type="EMBL" id="GU292915">
    <property type="protein sequence ID" value="ADB56731.1"/>
    <property type="molecule type" value="mRNA"/>
</dbReference>
<dbReference type="SMR" id="D2Y238"/>
<dbReference type="ArachnoServer" id="AS002049">
    <property type="toxin name" value="omega-theraphotoxin-Hhn1b"/>
</dbReference>
<dbReference type="GO" id="GO:0005576">
    <property type="term" value="C:extracellular region"/>
    <property type="evidence" value="ECO:0007669"/>
    <property type="project" value="UniProtKB-SubCell"/>
</dbReference>
<dbReference type="GO" id="GO:0008200">
    <property type="term" value="F:ion channel inhibitor activity"/>
    <property type="evidence" value="ECO:0007669"/>
    <property type="project" value="InterPro"/>
</dbReference>
<dbReference type="GO" id="GO:0090729">
    <property type="term" value="F:toxin activity"/>
    <property type="evidence" value="ECO:0007669"/>
    <property type="project" value="UniProtKB-KW"/>
</dbReference>
<dbReference type="InterPro" id="IPR011696">
    <property type="entry name" value="Huwentoxin-1"/>
</dbReference>
<dbReference type="InterPro" id="IPR013140">
    <property type="entry name" value="Huwentoxin_CS1"/>
</dbReference>
<dbReference type="Pfam" id="PF07740">
    <property type="entry name" value="Toxin_12"/>
    <property type="match status" value="1"/>
</dbReference>
<dbReference type="SUPFAM" id="SSF57059">
    <property type="entry name" value="omega toxin-like"/>
    <property type="match status" value="1"/>
</dbReference>
<dbReference type="PROSITE" id="PS60021">
    <property type="entry name" value="HWTX_1"/>
    <property type="match status" value="1"/>
</dbReference>
<evidence type="ECO:0000250" key="1"/>
<evidence type="ECO:0000255" key="2"/>
<evidence type="ECO:0000305" key="3"/>
<accession>D2Y238</accession>
<comment type="function">
    <text evidence="1">Ion channel inhibitor.</text>
</comment>
<comment type="subcellular location">
    <subcellularLocation>
        <location evidence="1">Secreted</location>
    </subcellularLocation>
</comment>
<comment type="tissue specificity">
    <text>Expressed by the venom gland.</text>
</comment>
<comment type="domain">
    <text evidence="1">The presence of a 'disulfide through disulfide knot' structurally defines this protein as a knottin.</text>
</comment>
<comment type="similarity">
    <text evidence="3">Belongs to the neurotoxin 10 (Hwtx-1) family. 17 (Hntx-9) subfamily.</text>
</comment>
<reference key="1">
    <citation type="journal article" date="2010" name="J. Proteome Res.">
        <title>Molecular diversification of peptide toxins from the tarantula Haplopelma hainanum (Ornithoctonus hainana) venom based on transcriptomic, peptidomic, and genomic analyses.</title>
        <authorList>
            <person name="Tang X."/>
            <person name="Zhang Y."/>
            <person name="Hu W."/>
            <person name="Xu D."/>
            <person name="Tao H."/>
            <person name="Yang X."/>
            <person name="Li Y."/>
            <person name="Jiang L."/>
            <person name="Liang S."/>
        </authorList>
    </citation>
    <scope>NUCLEOTIDE SEQUENCE [LARGE SCALE MRNA]</scope>
    <source>
        <tissue>Venom gland</tissue>
    </source>
</reference>